<reference key="1">
    <citation type="journal article" date="2004" name="Nat. Biotechnol.">
        <title>The genome sequence of the capnophilic rumen bacterium Mannheimia succiniciproducens.</title>
        <authorList>
            <person name="Hong S.H."/>
            <person name="Kim J.S."/>
            <person name="Lee S.Y."/>
            <person name="In Y.H."/>
            <person name="Choi S.S."/>
            <person name="Rih J.-K."/>
            <person name="Kim C.H."/>
            <person name="Jeong H."/>
            <person name="Hur C.G."/>
            <person name="Kim J.J."/>
        </authorList>
    </citation>
    <scope>NUCLEOTIDE SEQUENCE [LARGE SCALE GENOMIC DNA]</scope>
    <source>
        <strain>KCTC 0769BP / MBEL55E</strain>
    </source>
</reference>
<sequence>MQNQRIRIRLKAFDHRLIDQSTAEIVETAKRTGAQVRGPIPLPTRKERFTVLISPHVNKDARDQYEIRTHKRLVDIVEPTEKTVDALMRLDLAAGVDVQISLG</sequence>
<keyword id="KW-0687">Ribonucleoprotein</keyword>
<keyword id="KW-0689">Ribosomal protein</keyword>
<protein>
    <recommendedName>
        <fullName evidence="1">Small ribosomal subunit protein uS10</fullName>
    </recommendedName>
    <alternativeName>
        <fullName evidence="2">30S ribosomal protein S10</fullName>
    </alternativeName>
</protein>
<organism>
    <name type="scientific">Mannheimia succiniciproducens (strain KCTC 0769BP / MBEL55E)</name>
    <dbReference type="NCBI Taxonomy" id="221988"/>
    <lineage>
        <taxon>Bacteria</taxon>
        <taxon>Pseudomonadati</taxon>
        <taxon>Pseudomonadota</taxon>
        <taxon>Gammaproteobacteria</taxon>
        <taxon>Pasteurellales</taxon>
        <taxon>Pasteurellaceae</taxon>
        <taxon>Basfia</taxon>
    </lineage>
</organism>
<dbReference type="EMBL" id="AE016827">
    <property type="protein sequence ID" value="AAU38656.1"/>
    <property type="status" value="ALT_INIT"/>
    <property type="molecule type" value="Genomic_DNA"/>
</dbReference>
<dbReference type="RefSeq" id="WP_001181005.1">
    <property type="nucleotide sequence ID" value="NC_006300.1"/>
</dbReference>
<dbReference type="SMR" id="Q65QV4"/>
<dbReference type="STRING" id="221988.MS2049"/>
<dbReference type="GeneID" id="98390443"/>
<dbReference type="KEGG" id="msu:MS2049"/>
<dbReference type="eggNOG" id="COG0051">
    <property type="taxonomic scope" value="Bacteria"/>
</dbReference>
<dbReference type="HOGENOM" id="CLU_122625_1_3_6"/>
<dbReference type="OrthoDB" id="9804464at2"/>
<dbReference type="Proteomes" id="UP000000607">
    <property type="component" value="Chromosome"/>
</dbReference>
<dbReference type="GO" id="GO:1990904">
    <property type="term" value="C:ribonucleoprotein complex"/>
    <property type="evidence" value="ECO:0007669"/>
    <property type="project" value="UniProtKB-KW"/>
</dbReference>
<dbReference type="GO" id="GO:0005840">
    <property type="term" value="C:ribosome"/>
    <property type="evidence" value="ECO:0007669"/>
    <property type="project" value="UniProtKB-KW"/>
</dbReference>
<dbReference type="GO" id="GO:0003735">
    <property type="term" value="F:structural constituent of ribosome"/>
    <property type="evidence" value="ECO:0007669"/>
    <property type="project" value="InterPro"/>
</dbReference>
<dbReference type="GO" id="GO:0000049">
    <property type="term" value="F:tRNA binding"/>
    <property type="evidence" value="ECO:0007669"/>
    <property type="project" value="UniProtKB-UniRule"/>
</dbReference>
<dbReference type="GO" id="GO:0006412">
    <property type="term" value="P:translation"/>
    <property type="evidence" value="ECO:0007669"/>
    <property type="project" value="UniProtKB-UniRule"/>
</dbReference>
<dbReference type="FunFam" id="3.30.70.600:FF:000001">
    <property type="entry name" value="30S ribosomal protein S10"/>
    <property type="match status" value="1"/>
</dbReference>
<dbReference type="Gene3D" id="3.30.70.600">
    <property type="entry name" value="Ribosomal protein S10 domain"/>
    <property type="match status" value="1"/>
</dbReference>
<dbReference type="HAMAP" id="MF_00508">
    <property type="entry name" value="Ribosomal_uS10"/>
    <property type="match status" value="1"/>
</dbReference>
<dbReference type="InterPro" id="IPR001848">
    <property type="entry name" value="Ribosomal_uS10"/>
</dbReference>
<dbReference type="InterPro" id="IPR018268">
    <property type="entry name" value="Ribosomal_uS10_CS"/>
</dbReference>
<dbReference type="InterPro" id="IPR027486">
    <property type="entry name" value="Ribosomal_uS10_dom"/>
</dbReference>
<dbReference type="InterPro" id="IPR036838">
    <property type="entry name" value="Ribosomal_uS10_dom_sf"/>
</dbReference>
<dbReference type="NCBIfam" id="NF001861">
    <property type="entry name" value="PRK00596.1"/>
    <property type="match status" value="1"/>
</dbReference>
<dbReference type="NCBIfam" id="TIGR01049">
    <property type="entry name" value="rpsJ_bact"/>
    <property type="match status" value="1"/>
</dbReference>
<dbReference type="PANTHER" id="PTHR11700">
    <property type="entry name" value="30S RIBOSOMAL PROTEIN S10 FAMILY MEMBER"/>
    <property type="match status" value="1"/>
</dbReference>
<dbReference type="Pfam" id="PF00338">
    <property type="entry name" value="Ribosomal_S10"/>
    <property type="match status" value="1"/>
</dbReference>
<dbReference type="PRINTS" id="PR00971">
    <property type="entry name" value="RIBOSOMALS10"/>
</dbReference>
<dbReference type="SMART" id="SM01403">
    <property type="entry name" value="Ribosomal_S10"/>
    <property type="match status" value="1"/>
</dbReference>
<dbReference type="SUPFAM" id="SSF54999">
    <property type="entry name" value="Ribosomal protein S10"/>
    <property type="match status" value="1"/>
</dbReference>
<dbReference type="PROSITE" id="PS00361">
    <property type="entry name" value="RIBOSOMAL_S10"/>
    <property type="match status" value="1"/>
</dbReference>
<comment type="function">
    <text evidence="1">Involved in the binding of tRNA to the ribosomes.</text>
</comment>
<comment type="subunit">
    <text evidence="1">Part of the 30S ribosomal subunit.</text>
</comment>
<comment type="similarity">
    <text evidence="1">Belongs to the universal ribosomal protein uS10 family.</text>
</comment>
<comment type="sequence caution" evidence="2">
    <conflict type="erroneous initiation">
        <sequence resource="EMBL-CDS" id="AAU38656"/>
    </conflict>
</comment>
<gene>
    <name evidence="1" type="primary">rpsJ</name>
    <name type="ordered locus">MS2049</name>
</gene>
<proteinExistence type="inferred from homology"/>
<evidence type="ECO:0000255" key="1">
    <source>
        <dbReference type="HAMAP-Rule" id="MF_00508"/>
    </source>
</evidence>
<evidence type="ECO:0000305" key="2"/>
<accession>Q65QV4</accession>
<name>RS10_MANSM</name>
<feature type="chain" id="PRO_0000237060" description="Small ribosomal subunit protein uS10">
    <location>
        <begin position="1"/>
        <end position="103"/>
    </location>
</feature>